<proteinExistence type="inferred from homology"/>
<feature type="chain" id="PRO_1000149750" description="Phosphoglycerol transferase I">
    <location>
        <begin position="1"/>
        <end position="763"/>
    </location>
</feature>
<feature type="transmembrane region" description="Helical" evidence="1">
    <location>
        <begin position="1"/>
        <end position="21"/>
    </location>
</feature>
<feature type="transmembrane region" description="Helical" evidence="1">
    <location>
        <begin position="26"/>
        <end position="46"/>
    </location>
</feature>
<feature type="transmembrane region" description="Helical" evidence="1">
    <location>
        <begin position="77"/>
        <end position="97"/>
    </location>
</feature>
<feature type="transmembrane region" description="Helical" evidence="1">
    <location>
        <begin position="108"/>
        <end position="128"/>
    </location>
</feature>
<comment type="function">
    <text evidence="1">Transfers a phosphoglycerol residue from phosphatidylglycerol to the membrane-bound nascent glucan backbones.</text>
</comment>
<comment type="catalytic activity">
    <reaction evidence="1">
        <text>a phosphatidylglycerol + a membrane-derived-oligosaccharide D-glucose = a 1,2-diacyl-sn-glycerol + a membrane-derived-oligosaccharide 6-(glycerophospho)-D-glucose.</text>
        <dbReference type="EC" id="2.7.8.20"/>
    </reaction>
</comment>
<comment type="pathway">
    <text evidence="1">Glycan metabolism; osmoregulated periplasmic glucan (OPG) biosynthesis.</text>
</comment>
<comment type="subcellular location">
    <subcellularLocation>
        <location evidence="1">Cell inner membrane</location>
        <topology evidence="1">Multi-pass membrane protein</topology>
    </subcellularLocation>
</comment>
<comment type="similarity">
    <text evidence="1">Belongs to the OpgB family.</text>
</comment>
<protein>
    <recommendedName>
        <fullName evidence="1">Phosphoglycerol transferase I</fullName>
        <ecNumber evidence="1">2.7.8.20</ecNumber>
    </recommendedName>
    <alternativeName>
        <fullName evidence="1">Phosphatidylglycerol--membrane-oligosaccharide glycerophosphotransferase</fullName>
    </alternativeName>
</protein>
<sequence>MSELLSFALFLASVLIYAWKAGRNTWWFAATLTVLGLFVVLNITLFASDYFTGDGINDAVLYTLTNSLTGAGVSKYILPGIGIVLGLTAVFGALGWILRRRRRHPHHFGYSLLALLLALGSVDASPAFRQITELVKSQSRDGDPDFAAYYKEPSRTIPDPKLNLVYIYGESLERTYFDNEAFPDLTPELGALKNEGLDFSHTQQLPGTNYTIAGMVASQCGIPLFAPFEGNASASVSSFFPQNICLGDILKNSGYQNYFVQGANLRFAGKDVFLKSHGFDHLYGSEELKSVVADPHYRNDWGFYDDTVLDEAWKKFEELSRSGQRFSLFTLTVDTHHPDGFISRTCNRKKYDFDGKPNQSFSAVSCSQENIATFINKIKASPWFKDTVIVVSSDHLAMNNTAWKYLNKQDRNNLFFVIRGDKPQQETLAVKRNTMDNGATVLDILGGDNYLGLGRSSLSGQSMSEIFLNIKEKTLAWKPDIIRLWKFPKEMKEFTIDQQKNMIAFSGSHFRLPLLLRVSDKRVEPLPESEYSAPLRFQLADFAPRDNFVWVDRCYKMAQLWAPELALSTDWCVSQGQLGGQQIVQHVDKAIWKGKTAFKDTVIDMARYKGNVDTLKIVDNDIRYKADSFIFNVAGAPEEVKQFSGISRPESWGRWSNAQLGDEVKIEYKHPLPKKFDLVITAKAYGNNASRPIPVRVGNEEQTLVLGNEVTTTTLHFDNPTDADTLVIVPPEPVSTNEGNILGHSPRKLGIGMVEIKVVEREG</sequence>
<evidence type="ECO:0000255" key="1">
    <source>
        <dbReference type="HAMAP-Rule" id="MF_01070"/>
    </source>
</evidence>
<keyword id="KW-0997">Cell inner membrane</keyword>
<keyword id="KW-1003">Cell membrane</keyword>
<keyword id="KW-0472">Membrane</keyword>
<keyword id="KW-1185">Reference proteome</keyword>
<keyword id="KW-0808">Transferase</keyword>
<keyword id="KW-0812">Transmembrane</keyword>
<keyword id="KW-1133">Transmembrane helix</keyword>
<name>OPGB_ECO27</name>
<gene>
    <name evidence="1" type="primary">mdoB</name>
    <name evidence="1" type="synonym">opgB</name>
    <name type="ordered locus">E2348C_4658</name>
</gene>
<dbReference type="EC" id="2.7.8.20" evidence="1"/>
<dbReference type="EMBL" id="FM180568">
    <property type="protein sequence ID" value="CAS12206.1"/>
    <property type="molecule type" value="Genomic_DNA"/>
</dbReference>
<dbReference type="RefSeq" id="WP_001292691.1">
    <property type="nucleotide sequence ID" value="NC_011601.1"/>
</dbReference>
<dbReference type="SMR" id="B7UQY8"/>
<dbReference type="KEGG" id="ecg:E2348C_4658"/>
<dbReference type="HOGENOM" id="CLU_023986_1_0_6"/>
<dbReference type="UniPathway" id="UPA00637"/>
<dbReference type="Proteomes" id="UP000008205">
    <property type="component" value="Chromosome"/>
</dbReference>
<dbReference type="GO" id="GO:0005886">
    <property type="term" value="C:plasma membrane"/>
    <property type="evidence" value="ECO:0007669"/>
    <property type="project" value="UniProtKB-SubCell"/>
</dbReference>
<dbReference type="GO" id="GO:0008960">
    <property type="term" value="F:phosphatidylglycerol-membrane-oligosaccharide glycerophosphotransferase activity"/>
    <property type="evidence" value="ECO:0007669"/>
    <property type="project" value="UniProtKB-UniRule"/>
</dbReference>
<dbReference type="GO" id="GO:0009250">
    <property type="term" value="P:glucan biosynthetic process"/>
    <property type="evidence" value="ECO:0007669"/>
    <property type="project" value="UniProtKB-UniRule"/>
</dbReference>
<dbReference type="CDD" id="cd16015">
    <property type="entry name" value="LTA_synthase"/>
    <property type="match status" value="1"/>
</dbReference>
<dbReference type="FunFam" id="3.40.720.10:FF:000009">
    <property type="entry name" value="Phosphoglycerol transferase I"/>
    <property type="match status" value="1"/>
</dbReference>
<dbReference type="Gene3D" id="3.40.720.10">
    <property type="entry name" value="Alkaline Phosphatase, subunit A"/>
    <property type="match status" value="1"/>
</dbReference>
<dbReference type="HAMAP" id="MF_01070">
    <property type="entry name" value="MdoB_OpgB"/>
    <property type="match status" value="1"/>
</dbReference>
<dbReference type="InterPro" id="IPR017850">
    <property type="entry name" value="Alkaline_phosphatase_core_sf"/>
</dbReference>
<dbReference type="InterPro" id="IPR054288">
    <property type="entry name" value="DUF7024"/>
</dbReference>
<dbReference type="InterPro" id="IPR020881">
    <property type="entry name" value="OpgB"/>
</dbReference>
<dbReference type="InterPro" id="IPR050448">
    <property type="entry name" value="OpgB/LTA_synthase_biosynth"/>
</dbReference>
<dbReference type="InterPro" id="IPR000917">
    <property type="entry name" value="Sulfatase_N"/>
</dbReference>
<dbReference type="NCBIfam" id="NF003000">
    <property type="entry name" value="PRK03776.1"/>
    <property type="match status" value="1"/>
</dbReference>
<dbReference type="PANTHER" id="PTHR47371">
    <property type="entry name" value="LIPOTEICHOIC ACID SYNTHASE"/>
    <property type="match status" value="1"/>
</dbReference>
<dbReference type="PANTHER" id="PTHR47371:SF3">
    <property type="entry name" value="PHOSPHOGLYCEROL TRANSFERASE I"/>
    <property type="match status" value="1"/>
</dbReference>
<dbReference type="Pfam" id="PF22895">
    <property type="entry name" value="DUF7024"/>
    <property type="match status" value="1"/>
</dbReference>
<dbReference type="Pfam" id="PF00884">
    <property type="entry name" value="Sulfatase"/>
    <property type="match status" value="1"/>
</dbReference>
<dbReference type="SUPFAM" id="SSF53649">
    <property type="entry name" value="Alkaline phosphatase-like"/>
    <property type="match status" value="1"/>
</dbReference>
<organism>
    <name type="scientific">Escherichia coli O127:H6 (strain E2348/69 / EPEC)</name>
    <dbReference type="NCBI Taxonomy" id="574521"/>
    <lineage>
        <taxon>Bacteria</taxon>
        <taxon>Pseudomonadati</taxon>
        <taxon>Pseudomonadota</taxon>
        <taxon>Gammaproteobacteria</taxon>
        <taxon>Enterobacterales</taxon>
        <taxon>Enterobacteriaceae</taxon>
        <taxon>Escherichia</taxon>
    </lineage>
</organism>
<reference key="1">
    <citation type="journal article" date="2009" name="J. Bacteriol.">
        <title>Complete genome sequence and comparative genome analysis of enteropathogenic Escherichia coli O127:H6 strain E2348/69.</title>
        <authorList>
            <person name="Iguchi A."/>
            <person name="Thomson N.R."/>
            <person name="Ogura Y."/>
            <person name="Saunders D."/>
            <person name="Ooka T."/>
            <person name="Henderson I.R."/>
            <person name="Harris D."/>
            <person name="Asadulghani M."/>
            <person name="Kurokawa K."/>
            <person name="Dean P."/>
            <person name="Kenny B."/>
            <person name="Quail M.A."/>
            <person name="Thurston S."/>
            <person name="Dougan G."/>
            <person name="Hayashi T."/>
            <person name="Parkhill J."/>
            <person name="Frankel G."/>
        </authorList>
    </citation>
    <scope>NUCLEOTIDE SEQUENCE [LARGE SCALE GENOMIC DNA]</scope>
    <source>
        <strain>E2348/69 / EPEC</strain>
    </source>
</reference>
<accession>B7UQY8</accession>